<feature type="chain" id="PRO_0000277971" description="Glutamate--tRNA ligase 1">
    <location>
        <begin position="1"/>
        <end position="445"/>
    </location>
</feature>
<feature type="short sequence motif" description="'HIGH' region" evidence="1">
    <location>
        <begin position="10"/>
        <end position="20"/>
    </location>
</feature>
<feature type="short sequence motif" description="'KMSKS' region" evidence="1">
    <location>
        <begin position="240"/>
        <end position="244"/>
    </location>
</feature>
<feature type="binding site" evidence="1">
    <location>
        <position position="243"/>
    </location>
    <ligand>
        <name>ATP</name>
        <dbReference type="ChEBI" id="CHEBI:30616"/>
    </ligand>
</feature>
<reference key="1">
    <citation type="journal article" date="2006" name="PLoS Genet.">
        <title>Genome sequence of Rickettsia bellii illuminates the role of amoebae in gene exchanges between intracellular pathogens.</title>
        <authorList>
            <person name="Ogata H."/>
            <person name="La Scola B."/>
            <person name="Audic S."/>
            <person name="Renesto P."/>
            <person name="Blanc G."/>
            <person name="Robert C."/>
            <person name="Fournier P.-E."/>
            <person name="Claverie J.-M."/>
            <person name="Raoult D."/>
        </authorList>
    </citation>
    <scope>NUCLEOTIDE SEQUENCE [LARGE SCALE GENOMIC DNA]</scope>
    <source>
        <strain>RML369-C</strain>
    </source>
</reference>
<sequence length="445" mass="51851">MTKVITRFAPSPTGMLHVGNIRAALLNWLYAKKHDGQFILRFDDTDLERSKQEYKDAIRADLKFLNLNWDQTFNQLSRLSRYDEIKKLLLDKKRLYACYETPEELELKRKFQLSKGLPPIYDRAALNLTEDQIQKYIEQGRKPHYRFLVNHEPITWHDMIKGEVKYEGKALSDPIVIRADGSMTYMLCSVIDDVDYEITHIIRGEDHVSNTAIQIQMFEALDKYPPTFGHLSLIINKDEKISKRVGGFEIATLREEVGLEAMAIASFFSLLGSSAQIIPHKKMDELVKHFEISSFSKSPTIYQPEDLERLNHKLLISLEFNEVKDRLKEIDAEYIDENFWLSVRPNLKKLFDAKDWWEICHKTPNIQDLNLDKEYLKQAAELLPEEEITTETWGIWTKKLAAITNRKGKELFLPLRLALTGKESGPEISKVLPLIKREEIVKRLT</sequence>
<keyword id="KW-0030">Aminoacyl-tRNA synthetase</keyword>
<keyword id="KW-0067">ATP-binding</keyword>
<keyword id="KW-0963">Cytoplasm</keyword>
<keyword id="KW-0436">Ligase</keyword>
<keyword id="KW-0547">Nucleotide-binding</keyword>
<keyword id="KW-0648">Protein biosynthesis</keyword>
<gene>
    <name evidence="1" type="primary">gltX1</name>
    <name type="ordered locus">RBE_0711</name>
</gene>
<comment type="function">
    <text evidence="1">Catalyzes the attachment of glutamate to tRNA(Glu) in a two-step reaction: glutamate is first activated by ATP to form Glu-AMP and then transferred to the acceptor end of tRNA(Glu).</text>
</comment>
<comment type="catalytic activity">
    <reaction evidence="1">
        <text>tRNA(Glu) + L-glutamate + ATP = L-glutamyl-tRNA(Glu) + AMP + diphosphate</text>
        <dbReference type="Rhea" id="RHEA:23540"/>
        <dbReference type="Rhea" id="RHEA-COMP:9663"/>
        <dbReference type="Rhea" id="RHEA-COMP:9680"/>
        <dbReference type="ChEBI" id="CHEBI:29985"/>
        <dbReference type="ChEBI" id="CHEBI:30616"/>
        <dbReference type="ChEBI" id="CHEBI:33019"/>
        <dbReference type="ChEBI" id="CHEBI:78442"/>
        <dbReference type="ChEBI" id="CHEBI:78520"/>
        <dbReference type="ChEBI" id="CHEBI:456215"/>
        <dbReference type="EC" id="6.1.1.17"/>
    </reaction>
</comment>
<comment type="subunit">
    <text evidence="1">Monomer.</text>
</comment>
<comment type="subcellular location">
    <subcellularLocation>
        <location evidence="1">Cytoplasm</location>
    </subcellularLocation>
</comment>
<comment type="similarity">
    <text evidence="1">Belongs to the class-I aminoacyl-tRNA synthetase family. Glutamate--tRNA ligase type 1 subfamily.</text>
</comment>
<proteinExistence type="inferred from homology"/>
<protein>
    <recommendedName>
        <fullName evidence="1">Glutamate--tRNA ligase 1</fullName>
        <ecNumber evidence="1">6.1.1.17</ecNumber>
    </recommendedName>
    <alternativeName>
        <fullName evidence="1">Glutamyl-tRNA synthetase 1</fullName>
        <shortName evidence="1">GluRS 1</shortName>
    </alternativeName>
</protein>
<accession>Q1RIM2</accession>
<evidence type="ECO:0000255" key="1">
    <source>
        <dbReference type="HAMAP-Rule" id="MF_00022"/>
    </source>
</evidence>
<organism>
    <name type="scientific">Rickettsia bellii (strain RML369-C)</name>
    <dbReference type="NCBI Taxonomy" id="336407"/>
    <lineage>
        <taxon>Bacteria</taxon>
        <taxon>Pseudomonadati</taxon>
        <taxon>Pseudomonadota</taxon>
        <taxon>Alphaproteobacteria</taxon>
        <taxon>Rickettsiales</taxon>
        <taxon>Rickettsiaceae</taxon>
        <taxon>Rickettsieae</taxon>
        <taxon>Rickettsia</taxon>
        <taxon>belli group</taxon>
    </lineage>
</organism>
<dbReference type="EC" id="6.1.1.17" evidence="1"/>
<dbReference type="EMBL" id="CP000087">
    <property type="protein sequence ID" value="ABE04792.1"/>
    <property type="molecule type" value="Genomic_DNA"/>
</dbReference>
<dbReference type="RefSeq" id="WP_011477379.1">
    <property type="nucleotide sequence ID" value="NC_007940.1"/>
</dbReference>
<dbReference type="SMR" id="Q1RIM2"/>
<dbReference type="KEGG" id="rbe:RBE_0711"/>
<dbReference type="eggNOG" id="COG0008">
    <property type="taxonomic scope" value="Bacteria"/>
</dbReference>
<dbReference type="HOGENOM" id="CLU_015768_6_1_5"/>
<dbReference type="OrthoDB" id="9807503at2"/>
<dbReference type="Proteomes" id="UP000001951">
    <property type="component" value="Chromosome"/>
</dbReference>
<dbReference type="GO" id="GO:0005737">
    <property type="term" value="C:cytoplasm"/>
    <property type="evidence" value="ECO:0007669"/>
    <property type="project" value="UniProtKB-SubCell"/>
</dbReference>
<dbReference type="GO" id="GO:0005524">
    <property type="term" value="F:ATP binding"/>
    <property type="evidence" value="ECO:0007669"/>
    <property type="project" value="UniProtKB-UniRule"/>
</dbReference>
<dbReference type="GO" id="GO:0004818">
    <property type="term" value="F:glutamate-tRNA ligase activity"/>
    <property type="evidence" value="ECO:0007669"/>
    <property type="project" value="UniProtKB-UniRule"/>
</dbReference>
<dbReference type="GO" id="GO:0000049">
    <property type="term" value="F:tRNA binding"/>
    <property type="evidence" value="ECO:0007669"/>
    <property type="project" value="InterPro"/>
</dbReference>
<dbReference type="GO" id="GO:0006424">
    <property type="term" value="P:glutamyl-tRNA aminoacylation"/>
    <property type="evidence" value="ECO:0007669"/>
    <property type="project" value="UniProtKB-UniRule"/>
</dbReference>
<dbReference type="Gene3D" id="1.10.10.350">
    <property type="match status" value="1"/>
</dbReference>
<dbReference type="Gene3D" id="3.40.50.620">
    <property type="entry name" value="HUPs"/>
    <property type="match status" value="1"/>
</dbReference>
<dbReference type="HAMAP" id="MF_00022">
    <property type="entry name" value="Glu_tRNA_synth_type1"/>
    <property type="match status" value="1"/>
</dbReference>
<dbReference type="InterPro" id="IPR045462">
    <property type="entry name" value="aa-tRNA-synth_I_cd-bd"/>
</dbReference>
<dbReference type="InterPro" id="IPR020751">
    <property type="entry name" value="aa-tRNA-synth_I_codon-bd_sub2"/>
</dbReference>
<dbReference type="InterPro" id="IPR001412">
    <property type="entry name" value="aa-tRNA-synth_I_CS"/>
</dbReference>
<dbReference type="InterPro" id="IPR008925">
    <property type="entry name" value="aa_tRNA-synth_I_cd-bd_sf"/>
</dbReference>
<dbReference type="InterPro" id="IPR004527">
    <property type="entry name" value="Glu-tRNA-ligase_bac/mito"/>
</dbReference>
<dbReference type="InterPro" id="IPR000924">
    <property type="entry name" value="Glu/Gln-tRNA-synth"/>
</dbReference>
<dbReference type="InterPro" id="IPR020058">
    <property type="entry name" value="Glu/Gln-tRNA-synth_Ib_cat-dom"/>
</dbReference>
<dbReference type="InterPro" id="IPR049940">
    <property type="entry name" value="GluQ/Sye"/>
</dbReference>
<dbReference type="InterPro" id="IPR014729">
    <property type="entry name" value="Rossmann-like_a/b/a_fold"/>
</dbReference>
<dbReference type="NCBIfam" id="TIGR00464">
    <property type="entry name" value="gltX_bact"/>
    <property type="match status" value="1"/>
</dbReference>
<dbReference type="PANTHER" id="PTHR43311">
    <property type="entry name" value="GLUTAMATE--TRNA LIGASE"/>
    <property type="match status" value="1"/>
</dbReference>
<dbReference type="PANTHER" id="PTHR43311:SF2">
    <property type="entry name" value="GLUTAMATE--TRNA LIGASE, MITOCHONDRIAL-RELATED"/>
    <property type="match status" value="1"/>
</dbReference>
<dbReference type="Pfam" id="PF19269">
    <property type="entry name" value="Anticodon_2"/>
    <property type="match status" value="1"/>
</dbReference>
<dbReference type="Pfam" id="PF00749">
    <property type="entry name" value="tRNA-synt_1c"/>
    <property type="match status" value="1"/>
</dbReference>
<dbReference type="PRINTS" id="PR00987">
    <property type="entry name" value="TRNASYNTHGLU"/>
</dbReference>
<dbReference type="SUPFAM" id="SSF48163">
    <property type="entry name" value="An anticodon-binding domain of class I aminoacyl-tRNA synthetases"/>
    <property type="match status" value="1"/>
</dbReference>
<dbReference type="SUPFAM" id="SSF52374">
    <property type="entry name" value="Nucleotidylyl transferase"/>
    <property type="match status" value="1"/>
</dbReference>
<dbReference type="PROSITE" id="PS00178">
    <property type="entry name" value="AA_TRNA_LIGASE_I"/>
    <property type="match status" value="1"/>
</dbReference>
<name>SYE1_RICBR</name>